<dbReference type="EC" id="3.5.4.-"/>
<dbReference type="EMBL" id="AK098557">
    <property type="protein sequence ID" value="BAC05332.1"/>
    <property type="molecule type" value="mRNA"/>
</dbReference>
<dbReference type="EMBL" id="AL137800">
    <property type="status" value="NOT_ANNOTATED_CDS"/>
    <property type="molecule type" value="Genomic_DNA"/>
</dbReference>
<dbReference type="EMBL" id="BC021711">
    <property type="protein sequence ID" value="AAH21711.1"/>
    <property type="molecule type" value="mRNA"/>
</dbReference>
<dbReference type="CCDS" id="CCDS1358.1"/>
<dbReference type="RefSeq" id="NP_982279.1">
    <property type="nucleotide sequence ID" value="NM_203454.3"/>
</dbReference>
<dbReference type="SMR" id="Q8WW27"/>
<dbReference type="BioGRID" id="135625">
    <property type="interactions" value="3"/>
</dbReference>
<dbReference type="FunCoup" id="Q8WW27">
    <property type="interactions" value="2"/>
</dbReference>
<dbReference type="IntAct" id="Q8WW27">
    <property type="interactions" value="2"/>
</dbReference>
<dbReference type="STRING" id="9606.ENSP00000310622"/>
<dbReference type="iPTMnet" id="Q8WW27"/>
<dbReference type="PhosphoSitePlus" id="Q8WW27"/>
<dbReference type="BioMuta" id="APOBEC4"/>
<dbReference type="DMDM" id="74751569"/>
<dbReference type="MassIVE" id="Q8WW27"/>
<dbReference type="PaxDb" id="9606-ENSP00000310622"/>
<dbReference type="PeptideAtlas" id="Q8WW27"/>
<dbReference type="ProteomicsDB" id="74852"/>
<dbReference type="Antibodypedia" id="2817">
    <property type="antibodies" value="261 antibodies from 28 providers"/>
</dbReference>
<dbReference type="DNASU" id="403314"/>
<dbReference type="Ensembl" id="ENST00000308641.6">
    <property type="protein sequence ID" value="ENSP00000310622.4"/>
    <property type="gene ID" value="ENSG00000173627.8"/>
</dbReference>
<dbReference type="GeneID" id="403314"/>
<dbReference type="KEGG" id="hsa:403314"/>
<dbReference type="MANE-Select" id="ENST00000308641.6">
    <property type="protein sequence ID" value="ENSP00000310622.4"/>
    <property type="RefSeq nucleotide sequence ID" value="NM_203454.3"/>
    <property type="RefSeq protein sequence ID" value="NP_982279.1"/>
</dbReference>
<dbReference type="UCSC" id="uc001gqn.4">
    <property type="organism name" value="human"/>
</dbReference>
<dbReference type="AGR" id="HGNC:32152"/>
<dbReference type="CTD" id="403314"/>
<dbReference type="GeneCards" id="APOBEC4"/>
<dbReference type="HGNC" id="HGNC:32152">
    <property type="gene designation" value="APOBEC4"/>
</dbReference>
<dbReference type="HPA" id="ENSG00000173627">
    <property type="expression patterns" value="Group enriched (fallopian tube, testis)"/>
</dbReference>
<dbReference type="MIM" id="609908">
    <property type="type" value="gene"/>
</dbReference>
<dbReference type="neXtProt" id="NX_Q8WW27"/>
<dbReference type="OpenTargets" id="ENSG00000173627"/>
<dbReference type="PharmGKB" id="PA142672597"/>
<dbReference type="VEuPathDB" id="HostDB:ENSG00000173627"/>
<dbReference type="eggNOG" id="ENOG502QQXT">
    <property type="taxonomic scope" value="Eukaryota"/>
</dbReference>
<dbReference type="GeneTree" id="ENSGT00390000014243"/>
<dbReference type="HOGENOM" id="CLU_832944_0_0_1"/>
<dbReference type="InParanoid" id="Q8WW27"/>
<dbReference type="OMA" id="PASAWNR"/>
<dbReference type="OrthoDB" id="9941981at2759"/>
<dbReference type="PAN-GO" id="Q8WW27">
    <property type="GO annotations" value="0 GO annotations based on evolutionary models"/>
</dbReference>
<dbReference type="PhylomeDB" id="Q8WW27"/>
<dbReference type="TreeFam" id="TF338173"/>
<dbReference type="PathwayCommons" id="Q8WW27"/>
<dbReference type="Reactome" id="R-HSA-72200">
    <property type="pathway name" value="mRNA Editing: C to U Conversion"/>
</dbReference>
<dbReference type="Reactome" id="R-HSA-75094">
    <property type="pathway name" value="Formation of the Editosome"/>
</dbReference>
<dbReference type="SignaLink" id="Q8WW27"/>
<dbReference type="BioGRID-ORCS" id="403314">
    <property type="hits" value="29 hits in 1139 CRISPR screens"/>
</dbReference>
<dbReference type="ChiTaRS" id="APOBEC4">
    <property type="organism name" value="human"/>
</dbReference>
<dbReference type="GeneWiki" id="APOBEC4"/>
<dbReference type="GenomeRNAi" id="403314"/>
<dbReference type="Pharos" id="Q8WW27">
    <property type="development level" value="Tdark"/>
</dbReference>
<dbReference type="PRO" id="PR:Q8WW27"/>
<dbReference type="Proteomes" id="UP000005640">
    <property type="component" value="Chromosome 1"/>
</dbReference>
<dbReference type="RNAct" id="Q8WW27">
    <property type="molecule type" value="protein"/>
</dbReference>
<dbReference type="Bgee" id="ENSG00000173627">
    <property type="expression patterns" value="Expressed in bronchial epithelial cell and 39 other cell types or tissues"/>
</dbReference>
<dbReference type="GO" id="GO:0016787">
    <property type="term" value="F:hydrolase activity"/>
    <property type="evidence" value="ECO:0007669"/>
    <property type="project" value="UniProtKB-KW"/>
</dbReference>
<dbReference type="GO" id="GO:0046872">
    <property type="term" value="F:metal ion binding"/>
    <property type="evidence" value="ECO:0007669"/>
    <property type="project" value="UniProtKB-KW"/>
</dbReference>
<dbReference type="GO" id="GO:0006397">
    <property type="term" value="P:mRNA processing"/>
    <property type="evidence" value="ECO:0007669"/>
    <property type="project" value="UniProtKB-KW"/>
</dbReference>
<dbReference type="Gene3D" id="3.40.140.10">
    <property type="entry name" value="Cytidine Deaminase, domain 2"/>
    <property type="match status" value="1"/>
</dbReference>
<dbReference type="InterPro" id="IPR038953">
    <property type="entry name" value="APOBEC4"/>
</dbReference>
<dbReference type="InterPro" id="IPR002125">
    <property type="entry name" value="CMP_dCMP_dom"/>
</dbReference>
<dbReference type="PANTHER" id="PTHR35672">
    <property type="entry name" value="C-U-EDITING ENZYME APOBEC-4-RELATED"/>
    <property type="match status" value="1"/>
</dbReference>
<dbReference type="PANTHER" id="PTHR35672:SF1">
    <property type="entry name" value="C-U-EDITING ENZYME APOBEC-4-RELATED"/>
    <property type="match status" value="1"/>
</dbReference>
<dbReference type="Pfam" id="PF18778">
    <property type="entry name" value="NAD1"/>
    <property type="match status" value="1"/>
</dbReference>
<dbReference type="PROSITE" id="PS51747">
    <property type="entry name" value="CYT_DCMP_DEAMINASES_2"/>
    <property type="match status" value="1"/>
</dbReference>
<comment type="function">
    <text evidence="1">Putative C to U editing enzyme whose physiological substrate is not yet known.</text>
</comment>
<comment type="cofactor">
    <cofactor evidence="1">
        <name>Zn(2+)</name>
        <dbReference type="ChEBI" id="CHEBI:29105"/>
    </cofactor>
</comment>
<comment type="interaction">
    <interactant intactId="EBI-25836284">
        <id>Q8WW27</id>
    </interactant>
    <interactant intactId="EBI-718729">
        <id>P55212</id>
        <label>CASP6</label>
    </interactant>
    <organismsDiffer>false</organismsDiffer>
    <experiments>3</experiments>
</comment>
<comment type="interaction">
    <interactant intactId="EBI-25836284">
        <id>Q8WW27</id>
    </interactant>
    <interactant intactId="EBI-286642">
        <id>P62826</id>
        <label>RAN</label>
    </interactant>
    <organismsDiffer>false</organismsDiffer>
    <experiments>3</experiments>
</comment>
<comment type="tissue specificity">
    <text evidence="4">Predominantly expressed in testis.</text>
</comment>
<comment type="similarity">
    <text evidence="5">Belongs to the cytidine and deoxycytidylate deaminase family.</text>
</comment>
<gene>
    <name type="primary">APOBEC4</name>
    <name type="synonym">C1orf169</name>
</gene>
<name>ABEC4_HUMAN</name>
<protein>
    <recommendedName>
        <fullName>Putative C-&gt;U-editing enzyme APOBEC-4</fullName>
        <ecNumber>3.5.4.-</ecNumber>
    </recommendedName>
    <alternativeName>
        <fullName>Apolipoprotein B mRNA-editing enzyme catalytic polypeptide-like 4</fullName>
    </alternativeName>
</protein>
<accession>Q8WW27</accession>
<accession>Q8N7F6</accession>
<evidence type="ECO:0000250" key="1"/>
<evidence type="ECO:0000255" key="2">
    <source>
        <dbReference type="PROSITE-ProRule" id="PRU01083"/>
    </source>
</evidence>
<evidence type="ECO:0000269" key="3">
    <source>
    </source>
</evidence>
<evidence type="ECO:0000269" key="4">
    <source>
    </source>
</evidence>
<evidence type="ECO:0000305" key="5"/>
<feature type="chain" id="PRO_0000239355" description="Putative C-&gt;U-editing enzyme APOBEC-4">
    <location>
        <begin position="1"/>
        <end position="367"/>
    </location>
</feature>
<feature type="domain" description="CMP/dCMP-type deaminase" evidence="2">
    <location>
        <begin position="61"/>
        <end position="177"/>
    </location>
</feature>
<feature type="active site" description="Proton donor" evidence="1">
    <location>
        <position position="95"/>
    </location>
</feature>
<feature type="binding site" evidence="1">
    <location>
        <position position="93"/>
    </location>
    <ligand>
        <name>Zn(2+)</name>
        <dbReference type="ChEBI" id="CHEBI:29105"/>
        <note>catalytic</note>
    </ligand>
</feature>
<feature type="binding site" evidence="1">
    <location>
        <position position="127"/>
    </location>
    <ligand>
        <name>Zn(2+)</name>
        <dbReference type="ChEBI" id="CHEBI:29105"/>
        <note>catalytic</note>
    </ligand>
</feature>
<feature type="binding site" evidence="1">
    <location>
        <position position="134"/>
    </location>
    <ligand>
        <name>Zn(2+)</name>
        <dbReference type="ChEBI" id="CHEBI:29105"/>
        <note>catalytic</note>
    </ligand>
</feature>
<feature type="sequence variant" id="VAR_026639" description="In dbSNP:rs16861394.">
    <original>S</original>
    <variation>F</variation>
    <location>
        <position position="75"/>
    </location>
</feature>
<feature type="sequence variant" id="VAR_026640" description="In dbSNP:rs1174658." evidence="3">
    <original>F</original>
    <variation>S</variation>
    <location>
        <position position="271"/>
    </location>
</feature>
<feature type="sequence variant" id="VAR_026641" description="In dbSNP:rs10911391.">
    <original>P</original>
    <variation>S</variation>
    <location>
        <position position="275"/>
    </location>
</feature>
<feature type="sequence variant" id="VAR_048724" description="In dbSNP:rs16861381.">
    <original>D</original>
    <variation>G</variation>
    <location>
        <position position="300"/>
    </location>
</feature>
<feature type="sequence variant" id="VAR_026642" description="In dbSNP:rs1174657." evidence="3">
    <original>K</original>
    <variation>E</variation>
    <location>
        <position position="331"/>
    </location>
</feature>
<feature type="sequence variant" id="VAR_026643" description="In dbSNP:rs10911390.">
    <original>V</original>
    <variation>M</variation>
    <location>
        <position position="345"/>
    </location>
</feature>
<sequence length="367" mass="41581">MEPIYEEYLANHGTIVKPYYWLSFSLDCSNCPYHIRTGEEARVSLTEFCQIFGFPYGTTFPQTKHLTFYELKTSSGSLVQKGHASSCTGNYIHPESMLFEMNGYLDSAIYNNDSIRHIILYSNNSPCNEANHCCISKMYNFLITYPGITLSIYFSQLYHTEMDFPASAWNREALRSLASLWPRVVLSPISGGIWHSVLHSFISGVSGSHVFQPILTGRALADRHNAYEINAITGVKPYFTDVLLQTKRNPNTKAQEALESYPLNNAFPGQFFQMPSGQLQPNLPPDLRAPVVFVLVPLRDLPPMHMGQNPNKPRNIVRHLNMPQMSFQETKDLGRLPTGRSVEIVEITEQFASSKEADEKKKKKGKK</sequence>
<proteinExistence type="evidence at protein level"/>
<keyword id="KW-0378">Hydrolase</keyword>
<keyword id="KW-0479">Metal-binding</keyword>
<keyword id="KW-0507">mRNA processing</keyword>
<keyword id="KW-1267">Proteomics identification</keyword>
<keyword id="KW-1185">Reference proteome</keyword>
<keyword id="KW-0862">Zinc</keyword>
<organism>
    <name type="scientific">Homo sapiens</name>
    <name type="common">Human</name>
    <dbReference type="NCBI Taxonomy" id="9606"/>
    <lineage>
        <taxon>Eukaryota</taxon>
        <taxon>Metazoa</taxon>
        <taxon>Chordata</taxon>
        <taxon>Craniata</taxon>
        <taxon>Vertebrata</taxon>
        <taxon>Euteleostomi</taxon>
        <taxon>Mammalia</taxon>
        <taxon>Eutheria</taxon>
        <taxon>Euarchontoglires</taxon>
        <taxon>Primates</taxon>
        <taxon>Haplorrhini</taxon>
        <taxon>Catarrhini</taxon>
        <taxon>Hominidae</taxon>
        <taxon>Homo</taxon>
    </lineage>
</organism>
<reference key="1">
    <citation type="journal article" date="2004" name="Nat. Genet.">
        <title>Complete sequencing and characterization of 21,243 full-length human cDNAs.</title>
        <authorList>
            <person name="Ota T."/>
            <person name="Suzuki Y."/>
            <person name="Nishikawa T."/>
            <person name="Otsuki T."/>
            <person name="Sugiyama T."/>
            <person name="Irie R."/>
            <person name="Wakamatsu A."/>
            <person name="Hayashi K."/>
            <person name="Sato H."/>
            <person name="Nagai K."/>
            <person name="Kimura K."/>
            <person name="Makita H."/>
            <person name="Sekine M."/>
            <person name="Obayashi M."/>
            <person name="Nishi T."/>
            <person name="Shibahara T."/>
            <person name="Tanaka T."/>
            <person name="Ishii S."/>
            <person name="Yamamoto J."/>
            <person name="Saito K."/>
            <person name="Kawai Y."/>
            <person name="Isono Y."/>
            <person name="Nakamura Y."/>
            <person name="Nagahari K."/>
            <person name="Murakami K."/>
            <person name="Yasuda T."/>
            <person name="Iwayanagi T."/>
            <person name="Wagatsuma M."/>
            <person name="Shiratori A."/>
            <person name="Sudo H."/>
            <person name="Hosoiri T."/>
            <person name="Kaku Y."/>
            <person name="Kodaira H."/>
            <person name="Kondo H."/>
            <person name="Sugawara M."/>
            <person name="Takahashi M."/>
            <person name="Kanda K."/>
            <person name="Yokoi T."/>
            <person name="Furuya T."/>
            <person name="Kikkawa E."/>
            <person name="Omura Y."/>
            <person name="Abe K."/>
            <person name="Kamihara K."/>
            <person name="Katsuta N."/>
            <person name="Sato K."/>
            <person name="Tanikawa M."/>
            <person name="Yamazaki M."/>
            <person name="Ninomiya K."/>
            <person name="Ishibashi T."/>
            <person name="Yamashita H."/>
            <person name="Murakawa K."/>
            <person name="Fujimori K."/>
            <person name="Tanai H."/>
            <person name="Kimata M."/>
            <person name="Watanabe M."/>
            <person name="Hiraoka S."/>
            <person name="Chiba Y."/>
            <person name="Ishida S."/>
            <person name="Ono Y."/>
            <person name="Takiguchi S."/>
            <person name="Watanabe S."/>
            <person name="Yosida M."/>
            <person name="Hotuta T."/>
            <person name="Kusano J."/>
            <person name="Kanehori K."/>
            <person name="Takahashi-Fujii A."/>
            <person name="Hara H."/>
            <person name="Tanase T.-O."/>
            <person name="Nomura Y."/>
            <person name="Togiya S."/>
            <person name="Komai F."/>
            <person name="Hara R."/>
            <person name="Takeuchi K."/>
            <person name="Arita M."/>
            <person name="Imose N."/>
            <person name="Musashino K."/>
            <person name="Yuuki H."/>
            <person name="Oshima A."/>
            <person name="Sasaki N."/>
            <person name="Aotsuka S."/>
            <person name="Yoshikawa Y."/>
            <person name="Matsunawa H."/>
            <person name="Ichihara T."/>
            <person name="Shiohata N."/>
            <person name="Sano S."/>
            <person name="Moriya S."/>
            <person name="Momiyama H."/>
            <person name="Satoh N."/>
            <person name="Takami S."/>
            <person name="Terashima Y."/>
            <person name="Suzuki O."/>
            <person name="Nakagawa S."/>
            <person name="Senoh A."/>
            <person name="Mizoguchi H."/>
            <person name="Goto Y."/>
            <person name="Shimizu F."/>
            <person name="Wakebe H."/>
            <person name="Hishigaki H."/>
            <person name="Watanabe T."/>
            <person name="Sugiyama A."/>
            <person name="Takemoto M."/>
            <person name="Kawakami B."/>
            <person name="Yamazaki M."/>
            <person name="Watanabe K."/>
            <person name="Kumagai A."/>
            <person name="Itakura S."/>
            <person name="Fukuzumi Y."/>
            <person name="Fujimori Y."/>
            <person name="Komiyama M."/>
            <person name="Tashiro H."/>
            <person name="Tanigami A."/>
            <person name="Fujiwara T."/>
            <person name="Ono T."/>
            <person name="Yamada K."/>
            <person name="Fujii Y."/>
            <person name="Ozaki K."/>
            <person name="Hirao M."/>
            <person name="Ohmori Y."/>
            <person name="Kawabata A."/>
            <person name="Hikiji T."/>
            <person name="Kobatake N."/>
            <person name="Inagaki H."/>
            <person name="Ikema Y."/>
            <person name="Okamoto S."/>
            <person name="Okitani R."/>
            <person name="Kawakami T."/>
            <person name="Noguchi S."/>
            <person name="Itoh T."/>
            <person name="Shigeta K."/>
            <person name="Senba T."/>
            <person name="Matsumura K."/>
            <person name="Nakajima Y."/>
            <person name="Mizuno T."/>
            <person name="Morinaga M."/>
            <person name="Sasaki M."/>
            <person name="Togashi T."/>
            <person name="Oyama M."/>
            <person name="Hata H."/>
            <person name="Watanabe M."/>
            <person name="Komatsu T."/>
            <person name="Mizushima-Sugano J."/>
            <person name="Satoh T."/>
            <person name="Shirai Y."/>
            <person name="Takahashi Y."/>
            <person name="Nakagawa K."/>
            <person name="Okumura K."/>
            <person name="Nagase T."/>
            <person name="Nomura N."/>
            <person name="Kikuchi H."/>
            <person name="Masuho Y."/>
            <person name="Yamashita R."/>
            <person name="Nakai K."/>
            <person name="Yada T."/>
            <person name="Nakamura Y."/>
            <person name="Ohara O."/>
            <person name="Isogai T."/>
            <person name="Sugano S."/>
        </authorList>
    </citation>
    <scope>NUCLEOTIDE SEQUENCE [LARGE SCALE MRNA]</scope>
    <scope>VARIANTS SER-271 AND GLU-331</scope>
    <source>
        <tissue>Testis</tissue>
    </source>
</reference>
<reference key="2">
    <citation type="journal article" date="2006" name="Nature">
        <title>The DNA sequence and biological annotation of human chromosome 1.</title>
        <authorList>
            <person name="Gregory S.G."/>
            <person name="Barlow K.F."/>
            <person name="McLay K.E."/>
            <person name="Kaul R."/>
            <person name="Swarbreck D."/>
            <person name="Dunham A."/>
            <person name="Scott C.E."/>
            <person name="Howe K.L."/>
            <person name="Woodfine K."/>
            <person name="Spencer C.C.A."/>
            <person name="Jones M.C."/>
            <person name="Gillson C."/>
            <person name="Searle S."/>
            <person name="Zhou Y."/>
            <person name="Kokocinski F."/>
            <person name="McDonald L."/>
            <person name="Evans R."/>
            <person name="Phillips K."/>
            <person name="Atkinson A."/>
            <person name="Cooper R."/>
            <person name="Jones C."/>
            <person name="Hall R.E."/>
            <person name="Andrews T.D."/>
            <person name="Lloyd C."/>
            <person name="Ainscough R."/>
            <person name="Almeida J.P."/>
            <person name="Ambrose K.D."/>
            <person name="Anderson F."/>
            <person name="Andrew R.W."/>
            <person name="Ashwell R.I.S."/>
            <person name="Aubin K."/>
            <person name="Babbage A.K."/>
            <person name="Bagguley C.L."/>
            <person name="Bailey J."/>
            <person name="Beasley H."/>
            <person name="Bethel G."/>
            <person name="Bird C.P."/>
            <person name="Bray-Allen S."/>
            <person name="Brown J.Y."/>
            <person name="Brown A.J."/>
            <person name="Buckley D."/>
            <person name="Burton J."/>
            <person name="Bye J."/>
            <person name="Carder C."/>
            <person name="Chapman J.C."/>
            <person name="Clark S.Y."/>
            <person name="Clarke G."/>
            <person name="Clee C."/>
            <person name="Cobley V."/>
            <person name="Collier R.E."/>
            <person name="Corby N."/>
            <person name="Coville G.J."/>
            <person name="Davies J."/>
            <person name="Deadman R."/>
            <person name="Dunn M."/>
            <person name="Earthrowl M."/>
            <person name="Ellington A.G."/>
            <person name="Errington H."/>
            <person name="Frankish A."/>
            <person name="Frankland J."/>
            <person name="French L."/>
            <person name="Garner P."/>
            <person name="Garnett J."/>
            <person name="Gay L."/>
            <person name="Ghori M.R.J."/>
            <person name="Gibson R."/>
            <person name="Gilby L.M."/>
            <person name="Gillett W."/>
            <person name="Glithero R.J."/>
            <person name="Grafham D.V."/>
            <person name="Griffiths C."/>
            <person name="Griffiths-Jones S."/>
            <person name="Grocock R."/>
            <person name="Hammond S."/>
            <person name="Harrison E.S.I."/>
            <person name="Hart E."/>
            <person name="Haugen E."/>
            <person name="Heath P.D."/>
            <person name="Holmes S."/>
            <person name="Holt K."/>
            <person name="Howden P.J."/>
            <person name="Hunt A.R."/>
            <person name="Hunt S.E."/>
            <person name="Hunter G."/>
            <person name="Isherwood J."/>
            <person name="James R."/>
            <person name="Johnson C."/>
            <person name="Johnson D."/>
            <person name="Joy A."/>
            <person name="Kay M."/>
            <person name="Kershaw J.K."/>
            <person name="Kibukawa M."/>
            <person name="Kimberley A.M."/>
            <person name="King A."/>
            <person name="Knights A.J."/>
            <person name="Lad H."/>
            <person name="Laird G."/>
            <person name="Lawlor S."/>
            <person name="Leongamornlert D.A."/>
            <person name="Lloyd D.M."/>
            <person name="Loveland J."/>
            <person name="Lovell J."/>
            <person name="Lush M.J."/>
            <person name="Lyne R."/>
            <person name="Martin S."/>
            <person name="Mashreghi-Mohammadi M."/>
            <person name="Matthews L."/>
            <person name="Matthews N.S.W."/>
            <person name="McLaren S."/>
            <person name="Milne S."/>
            <person name="Mistry S."/>
            <person name="Moore M.J.F."/>
            <person name="Nickerson T."/>
            <person name="O'Dell C.N."/>
            <person name="Oliver K."/>
            <person name="Palmeiri A."/>
            <person name="Palmer S.A."/>
            <person name="Parker A."/>
            <person name="Patel D."/>
            <person name="Pearce A.V."/>
            <person name="Peck A.I."/>
            <person name="Pelan S."/>
            <person name="Phelps K."/>
            <person name="Phillimore B.J."/>
            <person name="Plumb R."/>
            <person name="Rajan J."/>
            <person name="Raymond C."/>
            <person name="Rouse G."/>
            <person name="Saenphimmachak C."/>
            <person name="Sehra H.K."/>
            <person name="Sheridan E."/>
            <person name="Shownkeen R."/>
            <person name="Sims S."/>
            <person name="Skuce C.D."/>
            <person name="Smith M."/>
            <person name="Steward C."/>
            <person name="Subramanian S."/>
            <person name="Sycamore N."/>
            <person name="Tracey A."/>
            <person name="Tromans A."/>
            <person name="Van Helmond Z."/>
            <person name="Wall M."/>
            <person name="Wallis J.M."/>
            <person name="White S."/>
            <person name="Whitehead S.L."/>
            <person name="Wilkinson J.E."/>
            <person name="Willey D.L."/>
            <person name="Williams H."/>
            <person name="Wilming L."/>
            <person name="Wray P.W."/>
            <person name="Wu Z."/>
            <person name="Coulson A."/>
            <person name="Vaudin M."/>
            <person name="Sulston J.E."/>
            <person name="Durbin R.M."/>
            <person name="Hubbard T."/>
            <person name="Wooster R."/>
            <person name="Dunham I."/>
            <person name="Carter N.P."/>
            <person name="McVean G."/>
            <person name="Ross M.T."/>
            <person name="Harrow J."/>
            <person name="Olson M.V."/>
            <person name="Beck S."/>
            <person name="Rogers J."/>
            <person name="Bentley D.R."/>
        </authorList>
    </citation>
    <scope>NUCLEOTIDE SEQUENCE [LARGE SCALE GENOMIC DNA]</scope>
</reference>
<reference key="3">
    <citation type="journal article" date="2004" name="Genome Res.">
        <title>The status, quality, and expansion of the NIH full-length cDNA project: the Mammalian Gene Collection (MGC).</title>
        <authorList>
            <consortium name="The MGC Project Team"/>
        </authorList>
    </citation>
    <scope>NUCLEOTIDE SEQUENCE [LARGE SCALE MRNA]</scope>
    <source>
        <tissue>Testis</tissue>
    </source>
</reference>
<reference key="4">
    <citation type="journal article" date="2005" name="Cell Cycle">
        <title>APOBEC4, a new member of the AID/APOBEC family of polynucleotide (deoxy)cytidine deaminases predicted by computational analysis.</title>
        <authorList>
            <person name="Rogozin I.B."/>
            <person name="Basu M.K."/>
            <person name="Jordan I.K."/>
            <person name="Pavlov Y.I."/>
            <person name="Koonin E.V."/>
        </authorList>
    </citation>
    <scope>IDENTIFICATION</scope>
    <scope>TISSUE SPECIFICITY</scope>
</reference>